<proteinExistence type="inferred from homology"/>
<accession>Q042T8</accession>
<keyword id="KW-0131">Cell cycle</keyword>
<keyword id="KW-0132">Cell division</keyword>
<keyword id="KW-0342">GTP-binding</keyword>
<keyword id="KW-0460">Magnesium</keyword>
<keyword id="KW-0479">Metal-binding</keyword>
<keyword id="KW-0547">Nucleotide-binding</keyword>
<keyword id="KW-0717">Septation</keyword>
<sequence>MKVVDTEFVISAVSEKQYPKDDLPEFALAGRSNVGKSSLINTIVNRRKLARTSQQPGKTQTLNFYKVNNELYLVDVPGYGYAKVSKKQRAAFGEMIQDYLETRADLKGLILLVDARHDPTADDINMFNYALYLDIPILVVATKMDKLKKMEASQIKQKIGKSLDLKQENVSFLPFSSVSKLNVDKFWDWIEDKM</sequence>
<gene>
    <name evidence="1" type="primary">engB</name>
    <name type="ordered locus">LGAS_1165</name>
</gene>
<evidence type="ECO:0000255" key="1">
    <source>
        <dbReference type="HAMAP-Rule" id="MF_00321"/>
    </source>
</evidence>
<comment type="function">
    <text evidence="1">Necessary for normal cell division and for the maintenance of normal septation.</text>
</comment>
<comment type="cofactor">
    <cofactor evidence="1">
        <name>Mg(2+)</name>
        <dbReference type="ChEBI" id="CHEBI:18420"/>
    </cofactor>
</comment>
<comment type="similarity">
    <text evidence="1">Belongs to the TRAFAC class TrmE-Era-EngA-EngB-Septin-like GTPase superfamily. EngB GTPase family.</text>
</comment>
<protein>
    <recommendedName>
        <fullName evidence="1">Probable GTP-binding protein EngB</fullName>
    </recommendedName>
</protein>
<organism>
    <name type="scientific">Lactobacillus gasseri (strain ATCC 33323 / DSM 20243 / BCRC 14619 / CIP 102991 / JCM 1131 / KCTC 3163 / NCIMB 11718 / NCTC 13722 / AM63)</name>
    <dbReference type="NCBI Taxonomy" id="324831"/>
    <lineage>
        <taxon>Bacteria</taxon>
        <taxon>Bacillati</taxon>
        <taxon>Bacillota</taxon>
        <taxon>Bacilli</taxon>
        <taxon>Lactobacillales</taxon>
        <taxon>Lactobacillaceae</taxon>
        <taxon>Lactobacillus</taxon>
    </lineage>
</organism>
<feature type="chain" id="PRO_1000005825" description="Probable GTP-binding protein EngB">
    <location>
        <begin position="1"/>
        <end position="194"/>
    </location>
</feature>
<feature type="domain" description="EngB-type G" evidence="1">
    <location>
        <begin position="22"/>
        <end position="194"/>
    </location>
</feature>
<feature type="binding site" evidence="1">
    <location>
        <begin position="30"/>
        <end position="37"/>
    </location>
    <ligand>
        <name>GTP</name>
        <dbReference type="ChEBI" id="CHEBI:37565"/>
    </ligand>
</feature>
<feature type="binding site" evidence="1">
    <location>
        <position position="37"/>
    </location>
    <ligand>
        <name>Mg(2+)</name>
        <dbReference type="ChEBI" id="CHEBI:18420"/>
    </ligand>
</feature>
<feature type="binding site" evidence="1">
    <location>
        <begin position="57"/>
        <end position="61"/>
    </location>
    <ligand>
        <name>GTP</name>
        <dbReference type="ChEBI" id="CHEBI:37565"/>
    </ligand>
</feature>
<feature type="binding site" evidence="1">
    <location>
        <position position="59"/>
    </location>
    <ligand>
        <name>Mg(2+)</name>
        <dbReference type="ChEBI" id="CHEBI:18420"/>
    </ligand>
</feature>
<feature type="binding site" evidence="1">
    <location>
        <begin position="75"/>
        <end position="78"/>
    </location>
    <ligand>
        <name>GTP</name>
        <dbReference type="ChEBI" id="CHEBI:37565"/>
    </ligand>
</feature>
<feature type="binding site" evidence="1">
    <location>
        <begin position="142"/>
        <end position="145"/>
    </location>
    <ligand>
        <name>GTP</name>
        <dbReference type="ChEBI" id="CHEBI:37565"/>
    </ligand>
</feature>
<feature type="binding site" evidence="1">
    <location>
        <begin position="175"/>
        <end position="177"/>
    </location>
    <ligand>
        <name>GTP</name>
        <dbReference type="ChEBI" id="CHEBI:37565"/>
    </ligand>
</feature>
<reference key="1">
    <citation type="journal article" date="2006" name="Proc. Natl. Acad. Sci. U.S.A.">
        <title>Comparative genomics of the lactic acid bacteria.</title>
        <authorList>
            <person name="Makarova K.S."/>
            <person name="Slesarev A."/>
            <person name="Wolf Y.I."/>
            <person name="Sorokin A."/>
            <person name="Mirkin B."/>
            <person name="Koonin E.V."/>
            <person name="Pavlov A."/>
            <person name="Pavlova N."/>
            <person name="Karamychev V."/>
            <person name="Polouchine N."/>
            <person name="Shakhova V."/>
            <person name="Grigoriev I."/>
            <person name="Lou Y."/>
            <person name="Rohksar D."/>
            <person name="Lucas S."/>
            <person name="Huang K."/>
            <person name="Goodstein D.M."/>
            <person name="Hawkins T."/>
            <person name="Plengvidhya V."/>
            <person name="Welker D."/>
            <person name="Hughes J."/>
            <person name="Goh Y."/>
            <person name="Benson A."/>
            <person name="Baldwin K."/>
            <person name="Lee J.-H."/>
            <person name="Diaz-Muniz I."/>
            <person name="Dosti B."/>
            <person name="Smeianov V."/>
            <person name="Wechter W."/>
            <person name="Barabote R."/>
            <person name="Lorca G."/>
            <person name="Altermann E."/>
            <person name="Barrangou R."/>
            <person name="Ganesan B."/>
            <person name="Xie Y."/>
            <person name="Rawsthorne H."/>
            <person name="Tamir D."/>
            <person name="Parker C."/>
            <person name="Breidt F."/>
            <person name="Broadbent J.R."/>
            <person name="Hutkins R."/>
            <person name="O'Sullivan D."/>
            <person name="Steele J."/>
            <person name="Unlu G."/>
            <person name="Saier M.H. Jr."/>
            <person name="Klaenhammer T."/>
            <person name="Richardson P."/>
            <person name="Kozyavkin S."/>
            <person name="Weimer B.C."/>
            <person name="Mills D.A."/>
        </authorList>
    </citation>
    <scope>NUCLEOTIDE SEQUENCE [LARGE SCALE GENOMIC DNA]</scope>
    <source>
        <strain>ATCC 33323 / DSM 20243 / BCRC 14619 / CIP 102991 / JCM 1131 / KCTC 3163 / NCIMB 11718 / NCTC 13722 / AM63</strain>
    </source>
</reference>
<name>ENGB_LACGA</name>
<dbReference type="EMBL" id="CP000413">
    <property type="protein sequence ID" value="ABJ60534.1"/>
    <property type="molecule type" value="Genomic_DNA"/>
</dbReference>
<dbReference type="SMR" id="Q042T8"/>
<dbReference type="GeneID" id="29639557"/>
<dbReference type="KEGG" id="lga:LGAS_1165"/>
<dbReference type="HOGENOM" id="CLU_033732_3_0_9"/>
<dbReference type="BioCyc" id="LGAS324831:G1G6Y-1161-MONOMER"/>
<dbReference type="Proteomes" id="UP000000664">
    <property type="component" value="Chromosome"/>
</dbReference>
<dbReference type="GO" id="GO:0005829">
    <property type="term" value="C:cytosol"/>
    <property type="evidence" value="ECO:0007669"/>
    <property type="project" value="TreeGrafter"/>
</dbReference>
<dbReference type="GO" id="GO:0005525">
    <property type="term" value="F:GTP binding"/>
    <property type="evidence" value="ECO:0007669"/>
    <property type="project" value="UniProtKB-UniRule"/>
</dbReference>
<dbReference type="GO" id="GO:0046872">
    <property type="term" value="F:metal ion binding"/>
    <property type="evidence" value="ECO:0007669"/>
    <property type="project" value="UniProtKB-KW"/>
</dbReference>
<dbReference type="GO" id="GO:0000917">
    <property type="term" value="P:division septum assembly"/>
    <property type="evidence" value="ECO:0007669"/>
    <property type="project" value="UniProtKB-KW"/>
</dbReference>
<dbReference type="CDD" id="cd01876">
    <property type="entry name" value="YihA_EngB"/>
    <property type="match status" value="1"/>
</dbReference>
<dbReference type="FunFam" id="3.40.50.300:FF:000098">
    <property type="entry name" value="Probable GTP-binding protein EngB"/>
    <property type="match status" value="1"/>
</dbReference>
<dbReference type="Gene3D" id="3.40.50.300">
    <property type="entry name" value="P-loop containing nucleotide triphosphate hydrolases"/>
    <property type="match status" value="1"/>
</dbReference>
<dbReference type="HAMAP" id="MF_00321">
    <property type="entry name" value="GTPase_EngB"/>
    <property type="match status" value="1"/>
</dbReference>
<dbReference type="InterPro" id="IPR030393">
    <property type="entry name" value="G_ENGB_dom"/>
</dbReference>
<dbReference type="InterPro" id="IPR006073">
    <property type="entry name" value="GTP-bd"/>
</dbReference>
<dbReference type="InterPro" id="IPR019987">
    <property type="entry name" value="GTP-bd_ribosome_bio_YsxC"/>
</dbReference>
<dbReference type="InterPro" id="IPR027417">
    <property type="entry name" value="P-loop_NTPase"/>
</dbReference>
<dbReference type="InterPro" id="IPR005225">
    <property type="entry name" value="Small_GTP-bd"/>
</dbReference>
<dbReference type="NCBIfam" id="TIGR03598">
    <property type="entry name" value="GTPase_YsxC"/>
    <property type="match status" value="1"/>
</dbReference>
<dbReference type="NCBIfam" id="TIGR00231">
    <property type="entry name" value="small_GTP"/>
    <property type="match status" value="1"/>
</dbReference>
<dbReference type="PANTHER" id="PTHR11649:SF13">
    <property type="entry name" value="ENGB-TYPE G DOMAIN-CONTAINING PROTEIN"/>
    <property type="match status" value="1"/>
</dbReference>
<dbReference type="PANTHER" id="PTHR11649">
    <property type="entry name" value="MSS1/TRME-RELATED GTP-BINDING PROTEIN"/>
    <property type="match status" value="1"/>
</dbReference>
<dbReference type="Pfam" id="PF01926">
    <property type="entry name" value="MMR_HSR1"/>
    <property type="match status" value="1"/>
</dbReference>
<dbReference type="SUPFAM" id="SSF52540">
    <property type="entry name" value="P-loop containing nucleoside triphosphate hydrolases"/>
    <property type="match status" value="1"/>
</dbReference>
<dbReference type="PROSITE" id="PS51706">
    <property type="entry name" value="G_ENGB"/>
    <property type="match status" value="1"/>
</dbReference>